<dbReference type="EMBL" id="AY115566">
    <property type="protein sequence ID" value="AAM48281.1"/>
    <property type="molecule type" value="mRNA"/>
</dbReference>
<dbReference type="EMBL" id="AC002521">
    <property type="protein sequence ID" value="AAC05341.1"/>
    <property type="molecule type" value="Genomic_DNA"/>
</dbReference>
<dbReference type="EMBL" id="CP002685">
    <property type="protein sequence ID" value="AEC05628.1"/>
    <property type="molecule type" value="Genomic_DNA"/>
</dbReference>
<dbReference type="EMBL" id="AF370496">
    <property type="protein sequence ID" value="AAK43873.1"/>
    <property type="molecule type" value="mRNA"/>
</dbReference>
<dbReference type="EMBL" id="BT020431">
    <property type="protein sequence ID" value="AAW28558.1"/>
    <property type="molecule type" value="mRNA"/>
</dbReference>
<dbReference type="EMBL" id="AY087438">
    <property type="protein sequence ID" value="AAM64984.1"/>
    <property type="molecule type" value="mRNA"/>
</dbReference>
<dbReference type="PIR" id="T00847">
    <property type="entry name" value="T00847"/>
</dbReference>
<dbReference type="RefSeq" id="NP_565290.1">
    <property type="nucleotide sequence ID" value="NM_126336.3"/>
</dbReference>
<dbReference type="SMR" id="O64503"/>
<dbReference type="BioGRID" id="213">
    <property type="interactions" value="5"/>
</dbReference>
<dbReference type="FunCoup" id="O64503">
    <property type="interactions" value="2479"/>
</dbReference>
<dbReference type="IntAct" id="O64503">
    <property type="interactions" value="5"/>
</dbReference>
<dbReference type="STRING" id="3702.O64503"/>
<dbReference type="TCDB" id="2.A.7.11.4">
    <property type="family name" value="the drug/metabolite transporter (dmt) superfamily"/>
</dbReference>
<dbReference type="PaxDb" id="3702-AT2G02810.1"/>
<dbReference type="ProteomicsDB" id="228526"/>
<dbReference type="EnsemblPlants" id="AT2G02810.1">
    <property type="protein sequence ID" value="AT2G02810.1"/>
    <property type="gene ID" value="AT2G02810"/>
</dbReference>
<dbReference type="GeneID" id="814811"/>
<dbReference type="Gramene" id="AT2G02810.1">
    <property type="protein sequence ID" value="AT2G02810.1"/>
    <property type="gene ID" value="AT2G02810"/>
</dbReference>
<dbReference type="KEGG" id="ath:AT2G02810"/>
<dbReference type="Araport" id="AT2G02810"/>
<dbReference type="TAIR" id="AT2G02810">
    <property type="gene designation" value="UTR1"/>
</dbReference>
<dbReference type="eggNOG" id="KOG1581">
    <property type="taxonomic scope" value="Eukaryota"/>
</dbReference>
<dbReference type="HOGENOM" id="CLU_036019_0_1_1"/>
<dbReference type="InParanoid" id="O64503"/>
<dbReference type="OMA" id="YLQCSAF"/>
<dbReference type="PhylomeDB" id="O64503"/>
<dbReference type="PRO" id="PR:O64503"/>
<dbReference type="Proteomes" id="UP000006548">
    <property type="component" value="Chromosome 2"/>
</dbReference>
<dbReference type="ExpressionAtlas" id="O64503">
    <property type="expression patterns" value="baseline and differential"/>
</dbReference>
<dbReference type="GO" id="GO:0005789">
    <property type="term" value="C:endoplasmic reticulum membrane"/>
    <property type="evidence" value="ECO:0000314"/>
    <property type="project" value="UniProtKB"/>
</dbReference>
<dbReference type="GO" id="GO:0015297">
    <property type="term" value="F:antiporter activity"/>
    <property type="evidence" value="ECO:0007669"/>
    <property type="project" value="UniProtKB-KW"/>
</dbReference>
<dbReference type="GO" id="GO:0005459">
    <property type="term" value="F:UDP-galactose transmembrane transporter activity"/>
    <property type="evidence" value="ECO:0000314"/>
    <property type="project" value="TAIR"/>
</dbReference>
<dbReference type="GO" id="GO:0005460">
    <property type="term" value="F:UDP-glucose transmembrane transporter activity"/>
    <property type="evidence" value="ECO:0000314"/>
    <property type="project" value="UniProtKB"/>
</dbReference>
<dbReference type="GO" id="GO:0009553">
    <property type="term" value="P:embryo sac development"/>
    <property type="evidence" value="ECO:0000315"/>
    <property type="project" value="UniProtKB"/>
</dbReference>
<dbReference type="GO" id="GO:0030968">
    <property type="term" value="P:endoplasmic reticulum unfolded protein response"/>
    <property type="evidence" value="ECO:0000315"/>
    <property type="project" value="TAIR"/>
</dbReference>
<dbReference type="GO" id="GO:0015780">
    <property type="term" value="P:nucleotide-sugar transmembrane transport"/>
    <property type="evidence" value="ECO:0000314"/>
    <property type="project" value="TAIR"/>
</dbReference>
<dbReference type="GO" id="GO:0009555">
    <property type="term" value="P:pollen development"/>
    <property type="evidence" value="ECO:0000315"/>
    <property type="project" value="UniProtKB"/>
</dbReference>
<dbReference type="InterPro" id="IPR013657">
    <property type="entry name" value="SCL35B1-4/HUT1"/>
</dbReference>
<dbReference type="PANTHER" id="PTHR10778">
    <property type="entry name" value="SOLUTE CARRIER FAMILY 35 MEMBER B"/>
    <property type="match status" value="1"/>
</dbReference>
<dbReference type="PANTHER" id="PTHR10778:SF36">
    <property type="entry name" value="UDP-GALACTOSE_UDP-GLUCOSE TRANSPORTER 1"/>
    <property type="match status" value="1"/>
</dbReference>
<dbReference type="Pfam" id="PF08449">
    <property type="entry name" value="UAA"/>
    <property type="match status" value="1"/>
</dbReference>
<gene>
    <name evidence="6" type="primary">UTR1</name>
    <name evidence="8" type="ordered locus">At2g02810</name>
    <name evidence="9" type="ORF">T20F6.5</name>
</gene>
<accession>O64503</accession>
<accession>Q8L885</accession>
<accession>Q8LB39</accession>
<organism>
    <name type="scientific">Arabidopsis thaliana</name>
    <name type="common">Mouse-ear cress</name>
    <dbReference type="NCBI Taxonomy" id="3702"/>
    <lineage>
        <taxon>Eukaryota</taxon>
        <taxon>Viridiplantae</taxon>
        <taxon>Streptophyta</taxon>
        <taxon>Embryophyta</taxon>
        <taxon>Tracheophyta</taxon>
        <taxon>Spermatophyta</taxon>
        <taxon>Magnoliopsida</taxon>
        <taxon>eudicotyledons</taxon>
        <taxon>Gunneridae</taxon>
        <taxon>Pentapetalae</taxon>
        <taxon>rosids</taxon>
        <taxon>malvids</taxon>
        <taxon>Brassicales</taxon>
        <taxon>Brassicaceae</taxon>
        <taxon>Camelineae</taxon>
        <taxon>Arabidopsis</taxon>
    </lineage>
</organism>
<comment type="function">
    <text evidence="3 4 5">Essential sugar transporter required for the transport of UDP-galactose and UDP-glucose from the cytoplasm into the Golgi and the endoplasmic reticulum, to ensure quality control of protein folding. Essential for pollen development and involved in embryo sac progress.</text>
</comment>
<comment type="subcellular location">
    <subcellularLocation>
        <location evidence="4 5">Endoplasmic reticulum membrane</location>
        <topology evidence="4 5">Multi-pass membrane protein</topology>
    </subcellularLocation>
</comment>
<comment type="induction">
    <text evidence="4 5">Up-regulated by stimuli that trigger unfolded protein accumulation in the ER (UPR) (e.g. DTT or tunicamycin) (at protein level).</text>
</comment>
<comment type="domain">
    <text evidence="1">The di-lysine motif confers endoplasmic reticulum localization for type I membrane proteins.</text>
</comment>
<comment type="disruption phenotype">
    <text evidence="5">Lethal.</text>
</comment>
<comment type="similarity">
    <text evidence="7">Belongs to the nucleotide-sugar transporter family. UDP-galactose:UMP antiporter (TC 2.A.7.11) subfamily.</text>
</comment>
<proteinExistence type="evidence at protein level"/>
<protein>
    <recommendedName>
        <fullName evidence="6">UDP-galactose/UDP-glucose transporter 1</fullName>
        <shortName evidence="6">At-UDP-Glc/GalT</shortName>
        <shortName evidence="6">AtUTr1</shortName>
    </recommendedName>
</protein>
<reference key="1">
    <citation type="journal article" date="2002" name="J. Biol. Chem.">
        <title>Transport of UDP-galactose in plants. Identification and functional characterization of AtUTr1, an Arabidopsis thaliana UDP-galactose/UDP-glucose transporter.</title>
        <authorList>
            <person name="Norambuena L."/>
            <person name="Marchant L."/>
            <person name="Berninsone P."/>
            <person name="Hirschberg C.B."/>
            <person name="Silva H."/>
            <person name="Orellana A."/>
        </authorList>
    </citation>
    <scope>NUCLEOTIDE SEQUENCE [MRNA]</scope>
    <scope>FUNCTION</scope>
    <scope>GENE FAMILY</scope>
    <scope>NOMENCLATURE</scope>
</reference>
<reference key="2">
    <citation type="journal article" date="1999" name="Nature">
        <title>Sequence and analysis of chromosome 2 of the plant Arabidopsis thaliana.</title>
        <authorList>
            <person name="Lin X."/>
            <person name="Kaul S."/>
            <person name="Rounsley S.D."/>
            <person name="Shea T.P."/>
            <person name="Benito M.-I."/>
            <person name="Town C.D."/>
            <person name="Fujii C.Y."/>
            <person name="Mason T.M."/>
            <person name="Bowman C.L."/>
            <person name="Barnstead M.E."/>
            <person name="Feldblyum T.V."/>
            <person name="Buell C.R."/>
            <person name="Ketchum K.A."/>
            <person name="Lee J.J."/>
            <person name="Ronning C.M."/>
            <person name="Koo H.L."/>
            <person name="Moffat K.S."/>
            <person name="Cronin L.A."/>
            <person name="Shen M."/>
            <person name="Pai G."/>
            <person name="Van Aken S."/>
            <person name="Umayam L."/>
            <person name="Tallon L.J."/>
            <person name="Gill J.E."/>
            <person name="Adams M.D."/>
            <person name="Carrera A.J."/>
            <person name="Creasy T.H."/>
            <person name="Goodman H.M."/>
            <person name="Somerville C.R."/>
            <person name="Copenhaver G.P."/>
            <person name="Preuss D."/>
            <person name="Nierman W.C."/>
            <person name="White O."/>
            <person name="Eisen J.A."/>
            <person name="Salzberg S.L."/>
            <person name="Fraser C.M."/>
            <person name="Venter J.C."/>
        </authorList>
    </citation>
    <scope>NUCLEOTIDE SEQUENCE [LARGE SCALE GENOMIC DNA]</scope>
    <source>
        <strain>cv. Columbia</strain>
    </source>
</reference>
<reference key="3">
    <citation type="journal article" date="2017" name="Plant J.">
        <title>Araport11: a complete reannotation of the Arabidopsis thaliana reference genome.</title>
        <authorList>
            <person name="Cheng C.Y."/>
            <person name="Krishnakumar V."/>
            <person name="Chan A.P."/>
            <person name="Thibaud-Nissen F."/>
            <person name="Schobel S."/>
            <person name="Town C.D."/>
        </authorList>
    </citation>
    <scope>GENOME REANNOTATION</scope>
    <source>
        <strain>cv. Columbia</strain>
    </source>
</reference>
<reference key="4">
    <citation type="journal article" date="2003" name="Science">
        <title>Empirical analysis of transcriptional activity in the Arabidopsis genome.</title>
        <authorList>
            <person name="Yamada K."/>
            <person name="Lim J."/>
            <person name="Dale J.M."/>
            <person name="Chen H."/>
            <person name="Shinn P."/>
            <person name="Palm C.J."/>
            <person name="Southwick A.M."/>
            <person name="Wu H.C."/>
            <person name="Kim C.J."/>
            <person name="Nguyen M."/>
            <person name="Pham P.K."/>
            <person name="Cheuk R.F."/>
            <person name="Karlin-Newmann G."/>
            <person name="Liu S.X."/>
            <person name="Lam B."/>
            <person name="Sakano H."/>
            <person name="Wu T."/>
            <person name="Yu G."/>
            <person name="Miranda M."/>
            <person name="Quach H.L."/>
            <person name="Tripp M."/>
            <person name="Chang C.H."/>
            <person name="Lee J.M."/>
            <person name="Toriumi M.J."/>
            <person name="Chan M.M."/>
            <person name="Tang C.C."/>
            <person name="Onodera C.S."/>
            <person name="Deng J.M."/>
            <person name="Akiyama K."/>
            <person name="Ansari Y."/>
            <person name="Arakawa T."/>
            <person name="Banh J."/>
            <person name="Banno F."/>
            <person name="Bowser L."/>
            <person name="Brooks S.Y."/>
            <person name="Carninci P."/>
            <person name="Chao Q."/>
            <person name="Choy N."/>
            <person name="Enju A."/>
            <person name="Goldsmith A.D."/>
            <person name="Gurjal M."/>
            <person name="Hansen N.F."/>
            <person name="Hayashizaki Y."/>
            <person name="Johnson-Hopson C."/>
            <person name="Hsuan V.W."/>
            <person name="Iida K."/>
            <person name="Karnes M."/>
            <person name="Khan S."/>
            <person name="Koesema E."/>
            <person name="Ishida J."/>
            <person name="Jiang P.X."/>
            <person name="Jones T."/>
            <person name="Kawai J."/>
            <person name="Kamiya A."/>
            <person name="Meyers C."/>
            <person name="Nakajima M."/>
            <person name="Narusaka M."/>
            <person name="Seki M."/>
            <person name="Sakurai T."/>
            <person name="Satou M."/>
            <person name="Tamse R."/>
            <person name="Vaysberg M."/>
            <person name="Wallender E.K."/>
            <person name="Wong C."/>
            <person name="Yamamura Y."/>
            <person name="Yuan S."/>
            <person name="Shinozaki K."/>
            <person name="Davis R.W."/>
            <person name="Theologis A."/>
            <person name="Ecker J.R."/>
        </authorList>
    </citation>
    <scope>NUCLEOTIDE SEQUENCE [LARGE SCALE MRNA]</scope>
    <source>
        <strain>cv. Columbia</strain>
    </source>
</reference>
<reference key="5">
    <citation type="submission" date="2004-12" db="EMBL/GenBank/DDBJ databases">
        <title>Arabidopsis ORF clones.</title>
        <authorList>
            <person name="Shinn P."/>
            <person name="Chen H."/>
            <person name="Cheuk R.F."/>
            <person name="Kim C.J."/>
            <person name="Ecker J.R."/>
        </authorList>
    </citation>
    <scope>NUCLEOTIDE SEQUENCE [LARGE SCALE MRNA]</scope>
    <source>
        <strain>cv. Columbia</strain>
    </source>
</reference>
<reference key="6">
    <citation type="submission" date="2002-03" db="EMBL/GenBank/DDBJ databases">
        <title>Full-length cDNA from Arabidopsis thaliana.</title>
        <authorList>
            <person name="Brover V.V."/>
            <person name="Troukhan M.E."/>
            <person name="Alexandrov N.A."/>
            <person name="Lu Y.-P."/>
            <person name="Flavell R.B."/>
            <person name="Feldmann K.A."/>
        </authorList>
    </citation>
    <scope>NUCLEOTIDE SEQUENCE [LARGE SCALE MRNA]</scope>
</reference>
<reference key="7">
    <citation type="journal article" date="2005" name="Glycobiology">
        <title>Molecular cloning of two Arabidopsis UDP-galactose transporters by complementation of a deficient Chinese hamster ovary cell line.</title>
        <authorList>
            <person name="Bakker H."/>
            <person name="Routier F."/>
            <person name="Oelmann S."/>
            <person name="Jordi W."/>
            <person name="Lommen A."/>
            <person name="Gerardy-Schahn R."/>
            <person name="Bosch D."/>
        </authorList>
    </citation>
    <scope>GENE FAMILY</scope>
    <source>
        <strain>cv. Columbia</strain>
    </source>
</reference>
<reference key="8">
    <citation type="journal article" date="2006" name="J. Biol. Chem.">
        <title>AtUTr1, a UDP-glucose/UDP-galactose transporter from Arabidopsis thaliana, is located in the endoplasmic reticulum and up-regulated by the unfolded protein response.</title>
        <authorList>
            <person name="Reyes F."/>
            <person name="Marchant L."/>
            <person name="Norambuena L."/>
            <person name="Nilo R."/>
            <person name="Silva H."/>
            <person name="Orellana A."/>
        </authorList>
    </citation>
    <scope>FUNCTION</scope>
    <scope>SUBCELLULAR LOCATION</scope>
    <scope>INDUCTION</scope>
    <source>
        <strain>cv. Landsberg erecta</strain>
    </source>
</reference>
<reference key="9">
    <citation type="journal article" date="2010" name="Plant J.">
        <title>The nucleotide sugar transporters AtUTr1 and AtUTr3 are required for the incorporation of UDP-glucose into the endoplasmic reticulum, are essential for pollen development and are needed for embryo sac progress in Arabidopsis thaliana.</title>
        <authorList>
            <person name="Reyes F."/>
            <person name="Leon G."/>
            <person name="Donoso M."/>
            <person name="Brandizzi F."/>
            <person name="Weber A.P."/>
            <person name="Orellana A."/>
        </authorList>
    </citation>
    <scope>FUNCTION AS UDP-GLUCOSE TRANSPORTER</scope>
    <scope>SUBCELLULAR LOCATION</scope>
    <scope>DISRUPTION PHENOTYPE</scope>
    <scope>INDUCTION</scope>
</reference>
<reference key="10">
    <citation type="journal article" date="2014" name="Proc. Natl. Acad. Sci. U.S.A.">
        <title>The Golgi localized bifunctional UDP-rhamnose/UDP-galactose transporter family of Arabidopsis.</title>
        <authorList>
            <person name="Rautengarten C."/>
            <person name="Ebert B."/>
            <person name="Moreno I."/>
            <person name="Temple H."/>
            <person name="Herter T."/>
            <person name="Link B."/>
            <person name="Donas-Cofre D."/>
            <person name="Moreno A."/>
            <person name="Saez-Aguayo S."/>
            <person name="Blanco F."/>
            <person name="Mortimer J.C."/>
            <person name="Schultink A."/>
            <person name="Reiter W.D."/>
            <person name="Dupree P."/>
            <person name="Pauly M."/>
            <person name="Heazlewood J.L."/>
            <person name="Scheller H.V."/>
            <person name="Orellana A."/>
        </authorList>
    </citation>
    <scope>GENE FAMILY</scope>
</reference>
<feature type="chain" id="PRO_0000415960" description="UDP-galactose/UDP-glucose transporter 1">
    <location>
        <begin position="1"/>
        <end position="332"/>
    </location>
</feature>
<feature type="transmembrane region" description="Helical" evidence="2">
    <location>
        <begin position="11"/>
        <end position="31"/>
    </location>
</feature>
<feature type="transmembrane region" description="Helical" evidence="2">
    <location>
        <begin position="49"/>
        <end position="69"/>
    </location>
</feature>
<feature type="transmembrane region" description="Helical" evidence="2">
    <location>
        <begin position="80"/>
        <end position="100"/>
    </location>
</feature>
<feature type="transmembrane region" description="Helical" evidence="2">
    <location>
        <begin position="112"/>
        <end position="132"/>
    </location>
</feature>
<feature type="transmembrane region" description="Helical" evidence="2">
    <location>
        <begin position="135"/>
        <end position="155"/>
    </location>
</feature>
<feature type="transmembrane region" description="Helical" evidence="2">
    <location>
        <begin position="206"/>
        <end position="226"/>
    </location>
</feature>
<feature type="transmembrane region" description="Helical" evidence="2">
    <location>
        <begin position="252"/>
        <end position="272"/>
    </location>
</feature>
<feature type="transmembrane region" description="Helical" evidence="2">
    <location>
        <begin position="301"/>
        <end position="317"/>
    </location>
</feature>
<feature type="short sequence motif" description="Di-lysine motif">
    <location>
        <begin position="327"/>
        <end position="332"/>
    </location>
</feature>
<feature type="sequence conflict" description="In Ref. 1; AAM48281." evidence="7" ref="1">
    <original>M</original>
    <variation>I</variation>
    <location>
        <position position="219"/>
    </location>
</feature>
<feature type="sequence conflict" description="In Ref. 6; AAM64984 and 1; AAM48281." evidence="7" ref="6 1">
    <original>K</original>
    <variation>E</variation>
    <location>
        <position position="232"/>
    </location>
</feature>
<keyword id="KW-0050">Antiport</keyword>
<keyword id="KW-0256">Endoplasmic reticulum</keyword>
<keyword id="KW-0472">Membrane</keyword>
<keyword id="KW-1185">Reference proteome</keyword>
<keyword id="KW-0762">Sugar transport</keyword>
<keyword id="KW-0812">Transmembrane</keyword>
<keyword id="KW-1133">Transmembrane helix</keyword>
<keyword id="KW-0813">Transport</keyword>
<sequence>MEVHGSGFRRILLLALCISGIWSAYIYQGVLQETLSTKRFGPDEKRFEHLAFLNLAQSVVCLIWSYIMIKLWSNAGNGGAPWWTYWSAGITNTIGPAMGIEALKYISYPAQVLAKSSKMIPVMLMGTLVYGIRYTFPEYMCTFLVAGGVSIFALLKTSSKTISKLAHPNAPLGYALCSLNLAFDGFTNATQDSIASRYPKTEAWDIMLGMNLWGTIYNMIYMFGLPQGIGFKAIQFCKLHPEAAWDILKYCICGAVGQNFIFMTISNFGSLANTTITTTRKFVSIVVSSVMSGNPLSLKQWGCVSMVFGGLAYQIYLKWKKLQRVEKKKQKS</sequence>
<evidence type="ECO:0000250" key="1"/>
<evidence type="ECO:0000255" key="2"/>
<evidence type="ECO:0000269" key="3">
    <source>
    </source>
</evidence>
<evidence type="ECO:0000269" key="4">
    <source>
    </source>
</evidence>
<evidence type="ECO:0000269" key="5">
    <source>
    </source>
</evidence>
<evidence type="ECO:0000303" key="6">
    <source>
    </source>
</evidence>
<evidence type="ECO:0000305" key="7"/>
<evidence type="ECO:0000312" key="8">
    <source>
        <dbReference type="Araport" id="AT2G02810"/>
    </source>
</evidence>
<evidence type="ECO:0000312" key="9">
    <source>
        <dbReference type="EMBL" id="AAC05341.1"/>
    </source>
</evidence>
<name>UTR1_ARATH</name>